<organism>
    <name type="scientific">Caenorhabditis elegans</name>
    <dbReference type="NCBI Taxonomy" id="6239"/>
    <lineage>
        <taxon>Eukaryota</taxon>
        <taxon>Metazoa</taxon>
        <taxon>Ecdysozoa</taxon>
        <taxon>Nematoda</taxon>
        <taxon>Chromadorea</taxon>
        <taxon>Rhabditida</taxon>
        <taxon>Rhabditina</taxon>
        <taxon>Rhabditomorpha</taxon>
        <taxon>Rhabditoidea</taxon>
        <taxon>Rhabditidae</taxon>
        <taxon>Peloderinae</taxon>
        <taxon>Caenorhabditis</taxon>
    </lineage>
</organism>
<reference key="1">
    <citation type="journal article" date="1998" name="Science">
        <title>Genome sequence of the nematode C. elegans: a platform for investigating biology.</title>
        <authorList>
            <consortium name="The C. elegans sequencing consortium"/>
        </authorList>
    </citation>
    <scope>NUCLEOTIDE SEQUENCE [LARGE SCALE GENOMIC DNA]</scope>
    <source>
        <strain>Bristol N2</strain>
    </source>
</reference>
<dbReference type="EC" id="3.4.19.12"/>
<dbReference type="EMBL" id="Z47811">
    <property type="protein sequence ID" value="CAA87786.3"/>
    <property type="molecule type" value="Genomic_DNA"/>
</dbReference>
<dbReference type="PIR" id="T23236">
    <property type="entry name" value="T23236"/>
</dbReference>
<dbReference type="RefSeq" id="NP_001309441.1">
    <property type="nucleotide sequence ID" value="NM_001322744.1"/>
</dbReference>
<dbReference type="BioGRID" id="39630">
    <property type="interactions" value="2"/>
</dbReference>
<dbReference type="FunCoup" id="Q09931">
    <property type="interactions" value="1857"/>
</dbReference>
<dbReference type="STRING" id="6239.K02C4.3a.1"/>
<dbReference type="MEROPS" id="C19.A34"/>
<dbReference type="PaxDb" id="6239-K02C4.3"/>
<dbReference type="PeptideAtlas" id="Q09931"/>
<dbReference type="EnsemblMetazoa" id="K02C4.3a.1">
    <property type="protein sequence ID" value="K02C4.3a.1"/>
    <property type="gene ID" value="WBGene00010502"/>
</dbReference>
<dbReference type="GeneID" id="174300"/>
<dbReference type="KEGG" id="cel:CELE_K02C4.3"/>
<dbReference type="UCSC" id="K02C4.3">
    <property type="organism name" value="c. elegans"/>
</dbReference>
<dbReference type="AGR" id="WB:WBGene00010502"/>
<dbReference type="CTD" id="174300"/>
<dbReference type="WormBase" id="K02C4.3a">
    <property type="protein sequence ID" value="CE51326"/>
    <property type="gene ID" value="WBGene00010502"/>
</dbReference>
<dbReference type="eggNOG" id="KOG1863">
    <property type="taxonomic scope" value="Eukaryota"/>
</dbReference>
<dbReference type="GeneTree" id="ENSGT00940000173177"/>
<dbReference type="HOGENOM" id="CLU_263514_0_0_1"/>
<dbReference type="InParanoid" id="Q09931"/>
<dbReference type="OMA" id="HKYELHA"/>
<dbReference type="OrthoDB" id="2420415at2759"/>
<dbReference type="PhylomeDB" id="Q09931"/>
<dbReference type="Reactome" id="R-CEL-5689880">
    <property type="pathway name" value="Ub-specific processing proteases"/>
</dbReference>
<dbReference type="PRO" id="PR:Q09931"/>
<dbReference type="Proteomes" id="UP000001940">
    <property type="component" value="Chromosome II"/>
</dbReference>
<dbReference type="Bgee" id="WBGene00010502">
    <property type="expression patterns" value="Expressed in germ line (C elegans) and 4 other cell types or tissues"/>
</dbReference>
<dbReference type="ExpressionAtlas" id="Q09931">
    <property type="expression patterns" value="baseline and differential"/>
</dbReference>
<dbReference type="GO" id="GO:0005829">
    <property type="term" value="C:cytosol"/>
    <property type="evidence" value="ECO:0000318"/>
    <property type="project" value="GO_Central"/>
</dbReference>
<dbReference type="GO" id="GO:0005634">
    <property type="term" value="C:nucleus"/>
    <property type="evidence" value="ECO:0000318"/>
    <property type="project" value="GO_Central"/>
</dbReference>
<dbReference type="GO" id="GO:0004843">
    <property type="term" value="F:cysteine-type deubiquitinase activity"/>
    <property type="evidence" value="ECO:0000318"/>
    <property type="project" value="GO_Central"/>
</dbReference>
<dbReference type="GO" id="GO:0016579">
    <property type="term" value="P:protein deubiquitination"/>
    <property type="evidence" value="ECO:0007669"/>
    <property type="project" value="InterPro"/>
</dbReference>
<dbReference type="GO" id="GO:0006508">
    <property type="term" value="P:proteolysis"/>
    <property type="evidence" value="ECO:0007669"/>
    <property type="project" value="UniProtKB-KW"/>
</dbReference>
<dbReference type="GO" id="GO:0031647">
    <property type="term" value="P:regulation of protein stability"/>
    <property type="evidence" value="ECO:0000318"/>
    <property type="project" value="GO_Central"/>
</dbReference>
<dbReference type="CDD" id="cd02665">
    <property type="entry name" value="Peptidase_C19I"/>
    <property type="match status" value="1"/>
</dbReference>
<dbReference type="Gene3D" id="3.90.70.10">
    <property type="entry name" value="Cysteine proteinases"/>
    <property type="match status" value="1"/>
</dbReference>
<dbReference type="InterPro" id="IPR038765">
    <property type="entry name" value="Papain-like_cys_pep_sf"/>
</dbReference>
<dbReference type="InterPro" id="IPR050164">
    <property type="entry name" value="Peptidase_C19"/>
</dbReference>
<dbReference type="InterPro" id="IPR001394">
    <property type="entry name" value="Peptidase_C19_UCH"/>
</dbReference>
<dbReference type="InterPro" id="IPR018200">
    <property type="entry name" value="USP_CS"/>
</dbReference>
<dbReference type="InterPro" id="IPR028889">
    <property type="entry name" value="USP_dom"/>
</dbReference>
<dbReference type="PANTHER" id="PTHR24006">
    <property type="entry name" value="UBIQUITIN CARBOXYL-TERMINAL HYDROLASE"/>
    <property type="match status" value="1"/>
</dbReference>
<dbReference type="PANTHER" id="PTHR24006:SF940">
    <property type="entry name" value="UBIQUITIN CARBOXYL-TERMINAL HYDROLASE K02C4.3-RELATED"/>
    <property type="match status" value="1"/>
</dbReference>
<dbReference type="Pfam" id="PF00443">
    <property type="entry name" value="UCH"/>
    <property type="match status" value="1"/>
</dbReference>
<dbReference type="SUPFAM" id="SSF54001">
    <property type="entry name" value="Cysteine proteinases"/>
    <property type="match status" value="1"/>
</dbReference>
<dbReference type="PROSITE" id="PS00972">
    <property type="entry name" value="USP_1"/>
    <property type="match status" value="1"/>
</dbReference>
<dbReference type="PROSITE" id="PS00973">
    <property type="entry name" value="USP_2"/>
    <property type="match status" value="1"/>
</dbReference>
<dbReference type="PROSITE" id="PS50235">
    <property type="entry name" value="USP_3"/>
    <property type="match status" value="1"/>
</dbReference>
<accession>Q09931</accession>
<name>UBPY_CAEEL</name>
<sequence>MVEENETGTPGTSRTVTFHDGRKLTDAEHFVFFKVKEVIADKVAEAEILESIRKRSECKPTDEQFISDIINELFYSGEPPKGRKSERFIGPLFDPEKASTASGPMDCTDVVSYDSTHPNISEISKKEEVEMQSAIQQSLASSASQNISRPTMLMSNLEDMVRNPNFSTGLYNSGNTCWLNCLSQVLYSIPKFRSILYHCAPLSWHEQPITNVKIENQQHAELLMLFRGLFAELQFSEMKYIEVGPLINMVDKLSKSSKGPSTIGTQQDATEMLTLIFDWLQRAFDAALHAQLNPEFSNVSDEENLVISDSTTTAPNSDIIGAPPGYNAANLSLPSSSHVDPKSTLNPMYVNEKEPSSTPTSLFGTRSKTIEVNESMDTEAATSSNLPGNSVENHPNPAAPEVDDNKKAFCDKLKESFNNIFSSVCYTESVAEDGTVSVKSNVRNCPQFFQLQVTYGNLHDALEAATFDHGLGNTASHVRNLYDPLPAVIFFGLSRFSFNSNIESKLHDKFTFPKIIFMDRYLKCNKEQLVQLRSHRELCRDSLSEVRAKLSGLRRYPQGNGEVRLEDSFQTVWQAVSNFREFVTFYLKVSQKTFFSREDAHENTAFVGPLTPSTYQSSSDNCSSKFVKDGGKLFPTFTEGFFPGKAAFIETLQNMLEALKTEERDCLAEEARLQEVIDQTYEVPELQQHKYELHAIIVHSGEANRGHYWTYKLKKSIDGLEEWEKLNDQNADRVDWPKVESDSFGTGSRDAPSAYMLMYVRSDAEWLVSADKLTALEAFETIPPDLQEKVLQKRDEFKEKLQRFRENKEFNYQQFSVDSPTVQSTEETPSSFSWYRDELEDIDIGDENANPTKNDYLLNARLDSYSVPIAPDVETSEMKRMVSQMWNQITKIAPRKYTDSQDLLDSNLRSVMEGESGGINFINSRLGYDIHELRSDADNDVEGVYNAFINEYLGLVKDLHELQNSKFVVFVGFQLQRIHVPVLRYLLVRAMAVSELGIISQRANNELSGMSSNSHDKGTAMLQIALLLSHFFELGVMSAWGCRSSLENIHVILNDFKKKNSRGSEQIEVTYCAMIGARNARICNGLLREMAYFLESYSIFFVSQKHIEACTVFSTITMIKLIMQHMASKTLQLIDMEFHLSKNERRVRFEDIIREVVSSVCIIHHWSKSYSKEFQNEINLKELMGLLHLKVEFMVSLTSFEVADPKYECLQAFKAMVVNTVMDLERASNELDYDVLDGAVELRELKKYFKELQLTDVKVNNIITSYDPIIESLVKI</sequence>
<gene>
    <name type="ORF">K02C4.3</name>
</gene>
<keyword id="KW-0378">Hydrolase</keyword>
<keyword id="KW-0645">Protease</keyword>
<keyword id="KW-1185">Reference proteome</keyword>
<keyword id="KW-0788">Thiol protease</keyword>
<keyword id="KW-0833">Ubl conjugation pathway</keyword>
<comment type="catalytic activity">
    <reaction>
        <text>Thiol-dependent hydrolysis of ester, thioester, amide, peptide and isopeptide bonds formed by the C-terminal Gly of ubiquitin (a 76-residue protein attached to proteins as an intracellular targeting signal).</text>
        <dbReference type="EC" id="3.4.19.12"/>
    </reaction>
</comment>
<comment type="similarity">
    <text evidence="4">Belongs to the peptidase C19 family.</text>
</comment>
<proteinExistence type="inferred from homology"/>
<evidence type="ECO:0000255" key="1">
    <source>
        <dbReference type="PROSITE-ProRule" id="PRU10092"/>
    </source>
</evidence>
<evidence type="ECO:0000255" key="2">
    <source>
        <dbReference type="PROSITE-ProRule" id="PRU10093"/>
    </source>
</evidence>
<evidence type="ECO:0000256" key="3">
    <source>
        <dbReference type="SAM" id="MobiDB-lite"/>
    </source>
</evidence>
<evidence type="ECO:0000305" key="4"/>
<feature type="chain" id="PRO_0000080685" description="Probable ubiquitin carboxyl-terminal hydrolase K02C4.3">
    <location>
        <begin position="1"/>
        <end position="1276"/>
    </location>
</feature>
<feature type="domain" description="USP">
    <location>
        <begin position="168"/>
        <end position="762"/>
    </location>
</feature>
<feature type="region of interest" description="Disordered" evidence="3">
    <location>
        <begin position="375"/>
        <end position="402"/>
    </location>
</feature>
<feature type="compositionally biased region" description="Polar residues" evidence="3">
    <location>
        <begin position="380"/>
        <end position="393"/>
    </location>
</feature>
<feature type="active site" description="Nucleophile" evidence="1 2">
    <location>
        <position position="177"/>
    </location>
</feature>
<feature type="active site" description="Proton acceptor" evidence="1 2">
    <location>
        <position position="707"/>
    </location>
</feature>
<protein>
    <recommendedName>
        <fullName>Probable ubiquitin carboxyl-terminal hydrolase K02C4.3</fullName>
        <ecNumber>3.4.19.12</ecNumber>
    </recommendedName>
    <alternativeName>
        <fullName>Deubiquitinating enzyme</fullName>
    </alternativeName>
    <alternativeName>
        <fullName>Ubiquitin thioesterase</fullName>
    </alternativeName>
    <alternativeName>
        <fullName>Ubiquitin-specific-processing protease</fullName>
    </alternativeName>
</protein>